<accession>Q211G4</accession>
<feature type="chain" id="PRO_0000251358" description="Large ribosomal subunit protein uL18">
    <location>
        <begin position="1"/>
        <end position="120"/>
    </location>
</feature>
<sequence length="120" mass="13128">MSKLKITNARRKQRVRLSLRRIANGRPRLSVFRSSKHIYAQVIDDLKGETLASASSLEKAMRDTGNTGANIDAAKAVGKLLAERAVKNGVTEVVFDRGGYLYHGRIKALADAARESGLSF</sequence>
<reference key="1">
    <citation type="submission" date="2006-03" db="EMBL/GenBank/DDBJ databases">
        <title>Complete sequence of Rhodopseudomonas palustris BisB18.</title>
        <authorList>
            <consortium name="US DOE Joint Genome Institute"/>
            <person name="Copeland A."/>
            <person name="Lucas S."/>
            <person name="Lapidus A."/>
            <person name="Barry K."/>
            <person name="Detter J.C."/>
            <person name="Glavina del Rio T."/>
            <person name="Hammon N."/>
            <person name="Israni S."/>
            <person name="Dalin E."/>
            <person name="Tice H."/>
            <person name="Pitluck S."/>
            <person name="Chain P."/>
            <person name="Malfatti S."/>
            <person name="Shin M."/>
            <person name="Vergez L."/>
            <person name="Schmutz J."/>
            <person name="Larimer F."/>
            <person name="Land M."/>
            <person name="Hauser L."/>
            <person name="Pelletier D.A."/>
            <person name="Kyrpides N."/>
            <person name="Anderson I."/>
            <person name="Oda Y."/>
            <person name="Harwood C.S."/>
            <person name="Richardson P."/>
        </authorList>
    </citation>
    <scope>NUCLEOTIDE SEQUENCE [LARGE SCALE GENOMIC DNA]</scope>
    <source>
        <strain>BisB18</strain>
    </source>
</reference>
<proteinExistence type="inferred from homology"/>
<name>RL18_RHOPB</name>
<evidence type="ECO:0000255" key="1">
    <source>
        <dbReference type="HAMAP-Rule" id="MF_01337"/>
    </source>
</evidence>
<evidence type="ECO:0000305" key="2"/>
<protein>
    <recommendedName>
        <fullName evidence="1">Large ribosomal subunit protein uL18</fullName>
    </recommendedName>
    <alternativeName>
        <fullName evidence="2">50S ribosomal protein L18</fullName>
    </alternativeName>
</protein>
<dbReference type="EMBL" id="CP000301">
    <property type="protein sequence ID" value="ABD88972.1"/>
    <property type="molecule type" value="Genomic_DNA"/>
</dbReference>
<dbReference type="SMR" id="Q211G4"/>
<dbReference type="STRING" id="316056.RPC_3432"/>
<dbReference type="KEGG" id="rpc:RPC_3432"/>
<dbReference type="eggNOG" id="COG0256">
    <property type="taxonomic scope" value="Bacteria"/>
</dbReference>
<dbReference type="HOGENOM" id="CLU_098841_0_1_5"/>
<dbReference type="OrthoDB" id="9810939at2"/>
<dbReference type="GO" id="GO:0022625">
    <property type="term" value="C:cytosolic large ribosomal subunit"/>
    <property type="evidence" value="ECO:0007669"/>
    <property type="project" value="TreeGrafter"/>
</dbReference>
<dbReference type="GO" id="GO:0008097">
    <property type="term" value="F:5S rRNA binding"/>
    <property type="evidence" value="ECO:0007669"/>
    <property type="project" value="TreeGrafter"/>
</dbReference>
<dbReference type="GO" id="GO:0003735">
    <property type="term" value="F:structural constituent of ribosome"/>
    <property type="evidence" value="ECO:0007669"/>
    <property type="project" value="InterPro"/>
</dbReference>
<dbReference type="GO" id="GO:0006412">
    <property type="term" value="P:translation"/>
    <property type="evidence" value="ECO:0007669"/>
    <property type="project" value="UniProtKB-UniRule"/>
</dbReference>
<dbReference type="CDD" id="cd00432">
    <property type="entry name" value="Ribosomal_L18_L5e"/>
    <property type="match status" value="1"/>
</dbReference>
<dbReference type="FunFam" id="3.30.420.100:FF:000001">
    <property type="entry name" value="50S ribosomal protein L18"/>
    <property type="match status" value="1"/>
</dbReference>
<dbReference type="Gene3D" id="3.30.420.100">
    <property type="match status" value="1"/>
</dbReference>
<dbReference type="HAMAP" id="MF_01337_B">
    <property type="entry name" value="Ribosomal_uL18_B"/>
    <property type="match status" value="1"/>
</dbReference>
<dbReference type="InterPro" id="IPR004389">
    <property type="entry name" value="Ribosomal_uL18_bac-type"/>
</dbReference>
<dbReference type="InterPro" id="IPR005484">
    <property type="entry name" value="Ribosomal_uL18_bac/euk"/>
</dbReference>
<dbReference type="NCBIfam" id="TIGR00060">
    <property type="entry name" value="L18_bact"/>
    <property type="match status" value="1"/>
</dbReference>
<dbReference type="PANTHER" id="PTHR12899">
    <property type="entry name" value="39S RIBOSOMAL PROTEIN L18, MITOCHONDRIAL"/>
    <property type="match status" value="1"/>
</dbReference>
<dbReference type="PANTHER" id="PTHR12899:SF3">
    <property type="entry name" value="LARGE RIBOSOMAL SUBUNIT PROTEIN UL18M"/>
    <property type="match status" value="1"/>
</dbReference>
<dbReference type="Pfam" id="PF00861">
    <property type="entry name" value="Ribosomal_L18p"/>
    <property type="match status" value="1"/>
</dbReference>
<dbReference type="SUPFAM" id="SSF53137">
    <property type="entry name" value="Translational machinery components"/>
    <property type="match status" value="1"/>
</dbReference>
<organism>
    <name type="scientific">Rhodopseudomonas palustris (strain BisB18)</name>
    <dbReference type="NCBI Taxonomy" id="316056"/>
    <lineage>
        <taxon>Bacteria</taxon>
        <taxon>Pseudomonadati</taxon>
        <taxon>Pseudomonadota</taxon>
        <taxon>Alphaproteobacteria</taxon>
        <taxon>Hyphomicrobiales</taxon>
        <taxon>Nitrobacteraceae</taxon>
        <taxon>Rhodopseudomonas</taxon>
    </lineage>
</organism>
<keyword id="KW-0687">Ribonucleoprotein</keyword>
<keyword id="KW-0689">Ribosomal protein</keyword>
<keyword id="KW-0694">RNA-binding</keyword>
<keyword id="KW-0699">rRNA-binding</keyword>
<gene>
    <name evidence="1" type="primary">rplR</name>
    <name type="ordered locus">RPC_3432</name>
</gene>
<comment type="function">
    <text evidence="1">This is one of the proteins that bind and probably mediate the attachment of the 5S RNA into the large ribosomal subunit, where it forms part of the central protuberance.</text>
</comment>
<comment type="subunit">
    <text evidence="1">Part of the 50S ribosomal subunit; part of the 5S rRNA/L5/L18/L25 subcomplex. Contacts the 5S and 23S rRNAs.</text>
</comment>
<comment type="similarity">
    <text evidence="1">Belongs to the universal ribosomal protein uL18 family.</text>
</comment>